<protein>
    <recommendedName>
        <fullName evidence="1">DNA mismatch repair protein MutL</fullName>
    </recommendedName>
</protein>
<sequence length="631" mass="71159">MPKIHELSETLTNQIAAGEVIERPASVVKELVENSLDAGATRIRVDFVDAGLKQIVVQDNGTGIARDQVDLAFTRHATSKISNEHDLFKVATLGFRGEALASISAVSHVEILTATKGAIGVKATFSGGNKKGQEDAAAREGTQITVRDLFFNTPARLKYLRSPRTEIMKIVDIINRLALGYPSVSFTLSNTGKVLLRTPGNGNLKQTVANVYGRHIAEKMEEFEAKDNDFKISGLMSKPELTRSTRNFVSILLNGRYIRNFQLNTAIMDGYGAKLAARHYPIIVLAIQVDPLLVDVNVHPTKQEVRLSKEKELSRLITSTISNVFIKKTEQTSAFANLENKRETLVDQLQFNLNQNVVNTARKKTPEIHENNEKPEFLAKPKKPEEEKTDYVDLNIPREDDKYIITKTWDKNVLLQQDLRPFSNTLCDSEVISSGDETLANNLPQLSYIGQIDTYIIAENNSDLFLIDQVAARRRLQFEKIYEMLLSKKIVQQGLLTPIVLEFGNLDFIQIKDKIDQIKQIGIYLEDFGQNSFIVRSYPTWIHNDVEETIRQILDGYLNLDKGKSENLFKRVAAMQAKRDISGKINLAAAEASQILIDLRKTEDPYHDADGRLVLVRMSENELKKMFKRDK</sequence>
<accession>Q5FLX4</accession>
<evidence type="ECO:0000255" key="1">
    <source>
        <dbReference type="HAMAP-Rule" id="MF_00149"/>
    </source>
</evidence>
<dbReference type="EMBL" id="CP000033">
    <property type="protein sequence ID" value="AAV42300.1"/>
    <property type="molecule type" value="Genomic_DNA"/>
</dbReference>
<dbReference type="RefSeq" id="WP_003549162.1">
    <property type="nucleotide sequence ID" value="NC_006814.3"/>
</dbReference>
<dbReference type="RefSeq" id="YP_193331.1">
    <property type="nucleotide sequence ID" value="NC_006814.3"/>
</dbReference>
<dbReference type="SMR" id="Q5FLX4"/>
<dbReference type="STRING" id="272621.LBA0409"/>
<dbReference type="GeneID" id="93290492"/>
<dbReference type="KEGG" id="lac:LBA0409"/>
<dbReference type="PATRIC" id="fig|272621.13.peg.394"/>
<dbReference type="eggNOG" id="COG0323">
    <property type="taxonomic scope" value="Bacteria"/>
</dbReference>
<dbReference type="HOGENOM" id="CLU_004131_4_1_9"/>
<dbReference type="OrthoDB" id="9763467at2"/>
<dbReference type="BioCyc" id="LACI272621:G1G49-403-MONOMER"/>
<dbReference type="Proteomes" id="UP000006381">
    <property type="component" value="Chromosome"/>
</dbReference>
<dbReference type="GO" id="GO:0032300">
    <property type="term" value="C:mismatch repair complex"/>
    <property type="evidence" value="ECO:0007669"/>
    <property type="project" value="InterPro"/>
</dbReference>
<dbReference type="GO" id="GO:0005524">
    <property type="term" value="F:ATP binding"/>
    <property type="evidence" value="ECO:0007669"/>
    <property type="project" value="InterPro"/>
</dbReference>
<dbReference type="GO" id="GO:0016887">
    <property type="term" value="F:ATP hydrolysis activity"/>
    <property type="evidence" value="ECO:0007669"/>
    <property type="project" value="InterPro"/>
</dbReference>
<dbReference type="GO" id="GO:0140664">
    <property type="term" value="F:ATP-dependent DNA damage sensor activity"/>
    <property type="evidence" value="ECO:0007669"/>
    <property type="project" value="InterPro"/>
</dbReference>
<dbReference type="GO" id="GO:0030983">
    <property type="term" value="F:mismatched DNA binding"/>
    <property type="evidence" value="ECO:0007669"/>
    <property type="project" value="InterPro"/>
</dbReference>
<dbReference type="GO" id="GO:0006298">
    <property type="term" value="P:mismatch repair"/>
    <property type="evidence" value="ECO:0007669"/>
    <property type="project" value="UniProtKB-UniRule"/>
</dbReference>
<dbReference type="CDD" id="cd16926">
    <property type="entry name" value="HATPase_MutL-MLH-PMS-like"/>
    <property type="match status" value="1"/>
</dbReference>
<dbReference type="CDD" id="cd00782">
    <property type="entry name" value="MutL_Trans"/>
    <property type="match status" value="1"/>
</dbReference>
<dbReference type="FunFam" id="3.30.565.10:FF:000003">
    <property type="entry name" value="DNA mismatch repair endonuclease MutL"/>
    <property type="match status" value="1"/>
</dbReference>
<dbReference type="Gene3D" id="3.30.230.10">
    <property type="match status" value="1"/>
</dbReference>
<dbReference type="Gene3D" id="3.30.565.10">
    <property type="entry name" value="Histidine kinase-like ATPase, C-terminal domain"/>
    <property type="match status" value="1"/>
</dbReference>
<dbReference type="Gene3D" id="3.30.1540.20">
    <property type="entry name" value="MutL, C-terminal domain, dimerisation subdomain"/>
    <property type="match status" value="1"/>
</dbReference>
<dbReference type="Gene3D" id="3.30.1370.100">
    <property type="entry name" value="MutL, C-terminal domain, regulatory subdomain"/>
    <property type="match status" value="1"/>
</dbReference>
<dbReference type="HAMAP" id="MF_00149">
    <property type="entry name" value="DNA_mis_repair"/>
    <property type="match status" value="1"/>
</dbReference>
<dbReference type="InterPro" id="IPR014762">
    <property type="entry name" value="DNA_mismatch_repair_CS"/>
</dbReference>
<dbReference type="InterPro" id="IPR020667">
    <property type="entry name" value="DNA_mismatch_repair_MutL"/>
</dbReference>
<dbReference type="InterPro" id="IPR013507">
    <property type="entry name" value="DNA_mismatch_S5_2-like"/>
</dbReference>
<dbReference type="InterPro" id="IPR036890">
    <property type="entry name" value="HATPase_C_sf"/>
</dbReference>
<dbReference type="InterPro" id="IPR002099">
    <property type="entry name" value="MutL/Mlh/PMS"/>
</dbReference>
<dbReference type="InterPro" id="IPR038973">
    <property type="entry name" value="MutL/Mlh/Pms-like"/>
</dbReference>
<dbReference type="InterPro" id="IPR014790">
    <property type="entry name" value="MutL_C"/>
</dbReference>
<dbReference type="InterPro" id="IPR042120">
    <property type="entry name" value="MutL_C_dimsub"/>
</dbReference>
<dbReference type="InterPro" id="IPR042121">
    <property type="entry name" value="MutL_C_regsub"/>
</dbReference>
<dbReference type="InterPro" id="IPR037198">
    <property type="entry name" value="MutL_C_sf"/>
</dbReference>
<dbReference type="InterPro" id="IPR020568">
    <property type="entry name" value="Ribosomal_Su5_D2-typ_SF"/>
</dbReference>
<dbReference type="InterPro" id="IPR014721">
    <property type="entry name" value="Ribsml_uS5_D2-typ_fold_subgr"/>
</dbReference>
<dbReference type="NCBIfam" id="TIGR00585">
    <property type="entry name" value="mutl"/>
    <property type="match status" value="1"/>
</dbReference>
<dbReference type="PANTHER" id="PTHR10073">
    <property type="entry name" value="DNA MISMATCH REPAIR PROTEIN MLH, PMS, MUTL"/>
    <property type="match status" value="1"/>
</dbReference>
<dbReference type="PANTHER" id="PTHR10073:SF12">
    <property type="entry name" value="DNA MISMATCH REPAIR PROTEIN MLH1"/>
    <property type="match status" value="1"/>
</dbReference>
<dbReference type="Pfam" id="PF01119">
    <property type="entry name" value="DNA_mis_repair"/>
    <property type="match status" value="1"/>
</dbReference>
<dbReference type="Pfam" id="PF13589">
    <property type="entry name" value="HATPase_c_3"/>
    <property type="match status" value="1"/>
</dbReference>
<dbReference type="Pfam" id="PF08676">
    <property type="entry name" value="MutL_C"/>
    <property type="match status" value="1"/>
</dbReference>
<dbReference type="SMART" id="SM01340">
    <property type="entry name" value="DNA_mis_repair"/>
    <property type="match status" value="1"/>
</dbReference>
<dbReference type="SMART" id="SM00853">
    <property type="entry name" value="MutL_C"/>
    <property type="match status" value="1"/>
</dbReference>
<dbReference type="SUPFAM" id="SSF55874">
    <property type="entry name" value="ATPase domain of HSP90 chaperone/DNA topoisomerase II/histidine kinase"/>
    <property type="match status" value="1"/>
</dbReference>
<dbReference type="SUPFAM" id="SSF118116">
    <property type="entry name" value="DNA mismatch repair protein MutL"/>
    <property type="match status" value="1"/>
</dbReference>
<dbReference type="SUPFAM" id="SSF54211">
    <property type="entry name" value="Ribosomal protein S5 domain 2-like"/>
    <property type="match status" value="1"/>
</dbReference>
<dbReference type="PROSITE" id="PS00058">
    <property type="entry name" value="DNA_MISMATCH_REPAIR_1"/>
    <property type="match status" value="1"/>
</dbReference>
<comment type="function">
    <text evidence="1">This protein is involved in the repair of mismatches in DNA. It is required for dam-dependent methyl-directed DNA mismatch repair. May act as a 'molecular matchmaker', a protein that promotes the formation of a stable complex between two or more DNA-binding proteins in an ATP-dependent manner without itself being part of a final effector complex.</text>
</comment>
<comment type="similarity">
    <text evidence="1">Belongs to the DNA mismatch repair MutL/HexB family.</text>
</comment>
<name>MUTL_LACAC</name>
<feature type="chain" id="PRO_1000010027" description="DNA mismatch repair protein MutL">
    <location>
        <begin position="1"/>
        <end position="631"/>
    </location>
</feature>
<gene>
    <name evidence="1" type="primary">mutL</name>
    <name type="ordered locus">LBA0409</name>
</gene>
<keyword id="KW-0227">DNA damage</keyword>
<keyword id="KW-0234">DNA repair</keyword>
<keyword id="KW-1185">Reference proteome</keyword>
<proteinExistence type="inferred from homology"/>
<organism>
    <name type="scientific">Lactobacillus acidophilus (strain ATCC 700396 / NCK56 / N2 / NCFM)</name>
    <dbReference type="NCBI Taxonomy" id="272621"/>
    <lineage>
        <taxon>Bacteria</taxon>
        <taxon>Bacillati</taxon>
        <taxon>Bacillota</taxon>
        <taxon>Bacilli</taxon>
        <taxon>Lactobacillales</taxon>
        <taxon>Lactobacillaceae</taxon>
        <taxon>Lactobacillus</taxon>
    </lineage>
</organism>
<reference key="1">
    <citation type="journal article" date="2005" name="Proc. Natl. Acad. Sci. U.S.A.">
        <title>Complete genome sequence of the probiotic lactic acid bacterium Lactobacillus acidophilus NCFM.</title>
        <authorList>
            <person name="Altermann E."/>
            <person name="Russell W.M."/>
            <person name="Azcarate-Peril M.A."/>
            <person name="Barrangou R."/>
            <person name="Buck B.L."/>
            <person name="McAuliffe O."/>
            <person name="Souther N."/>
            <person name="Dobson A."/>
            <person name="Duong T."/>
            <person name="Callanan M."/>
            <person name="Lick S."/>
            <person name="Hamrick A."/>
            <person name="Cano R."/>
            <person name="Klaenhammer T.R."/>
        </authorList>
    </citation>
    <scope>NUCLEOTIDE SEQUENCE [LARGE SCALE GENOMIC DNA]</scope>
    <source>
        <strain>ATCC 700396 / NCK56 / N2 / NCFM</strain>
    </source>
</reference>